<feature type="initiator methionine" description="Removed" evidence="1">
    <location>
        <position position="1"/>
    </location>
</feature>
<feature type="chain" id="PRO_0000127282" description="Max-binding protein MNT">
    <location>
        <begin position="2"/>
        <end position="591"/>
    </location>
</feature>
<feature type="domain" description="bHLH" evidence="2">
    <location>
        <begin position="222"/>
        <end position="273"/>
    </location>
</feature>
<feature type="region of interest" description="Disordered" evidence="3">
    <location>
        <begin position="17"/>
        <end position="122"/>
    </location>
</feature>
<feature type="region of interest" description="Disordered" evidence="3">
    <location>
        <begin position="182"/>
        <end position="223"/>
    </location>
</feature>
<feature type="region of interest" description="Leucine-zipper">
    <location>
        <begin position="273"/>
        <end position="301"/>
    </location>
</feature>
<feature type="region of interest" description="Disordered" evidence="3">
    <location>
        <begin position="321"/>
        <end position="426"/>
    </location>
</feature>
<feature type="compositionally biased region" description="Basic and acidic residues" evidence="3">
    <location>
        <begin position="22"/>
        <end position="44"/>
    </location>
</feature>
<feature type="compositionally biased region" description="Pro residues" evidence="3">
    <location>
        <begin position="63"/>
        <end position="84"/>
    </location>
</feature>
<feature type="compositionally biased region" description="Pro residues" evidence="3">
    <location>
        <begin position="102"/>
        <end position="120"/>
    </location>
</feature>
<feature type="compositionally biased region" description="Basic and acidic residues" evidence="3">
    <location>
        <begin position="205"/>
        <end position="216"/>
    </location>
</feature>
<feature type="compositionally biased region" description="Acidic residues" evidence="3">
    <location>
        <begin position="336"/>
        <end position="346"/>
    </location>
</feature>
<feature type="compositionally biased region" description="Pro residues" evidence="3">
    <location>
        <begin position="374"/>
        <end position="383"/>
    </location>
</feature>
<feature type="compositionally biased region" description="Low complexity" evidence="3">
    <location>
        <begin position="390"/>
        <end position="411"/>
    </location>
</feature>
<feature type="compositionally biased region" description="Pro residues" evidence="3">
    <location>
        <begin position="412"/>
        <end position="421"/>
    </location>
</feature>
<feature type="modified residue" description="N-acetylserine" evidence="1">
    <location>
        <position position="2"/>
    </location>
</feature>
<feature type="sequence conflict" description="In Ref. 1; AAB38687." evidence="4" ref="1">
    <original>P</original>
    <variation>T</variation>
    <location>
        <position position="379"/>
    </location>
</feature>
<feature type="sequence conflict" description="In Ref. 1; AAB38687." evidence="4" ref="1">
    <original>A</original>
    <variation>V</variation>
    <location>
        <position position="392"/>
    </location>
</feature>
<feature type="sequence conflict" description="In Ref. 1; AAB38687." evidence="4" ref="1">
    <original>QQ</original>
    <variation>EE</variation>
    <location>
        <begin position="402"/>
        <end position="403"/>
    </location>
</feature>
<feature type="sequence conflict" description="In Ref. 1; AAB38687." evidence="4" ref="1">
    <original>A</original>
    <variation>G</variation>
    <location>
        <position position="414"/>
    </location>
</feature>
<feature type="sequence conflict" description="In Ref. 1; AAB38687." evidence="4" ref="1">
    <original>A</original>
    <variation>V</variation>
    <location>
        <position position="431"/>
    </location>
</feature>
<feature type="sequence conflict" description="In Ref. 1; AAB38687." evidence="4" ref="1">
    <original>P</original>
    <variation>A</variation>
    <location>
        <position position="465"/>
    </location>
</feature>
<feature type="sequence conflict" description="In Ref. 1; AAB38687." evidence="4" ref="1">
    <original>A</original>
    <variation>T</variation>
    <location>
        <position position="525"/>
    </location>
</feature>
<feature type="sequence conflict" description="In Ref. 1; AAB38687." evidence="4" ref="1">
    <original>A</original>
    <variation>G</variation>
    <location>
        <position position="558"/>
    </location>
</feature>
<evidence type="ECO:0000250" key="1">
    <source>
        <dbReference type="UniProtKB" id="Q99583"/>
    </source>
</evidence>
<evidence type="ECO:0000255" key="2">
    <source>
        <dbReference type="PROSITE-ProRule" id="PRU00981"/>
    </source>
</evidence>
<evidence type="ECO:0000256" key="3">
    <source>
        <dbReference type="SAM" id="MobiDB-lite"/>
    </source>
</evidence>
<evidence type="ECO:0000305" key="4"/>
<keyword id="KW-0007">Acetylation</keyword>
<keyword id="KW-0238">DNA-binding</keyword>
<keyword id="KW-0539">Nucleus</keyword>
<keyword id="KW-1185">Reference proteome</keyword>
<keyword id="KW-0678">Repressor</keyword>
<keyword id="KW-0804">Transcription</keyword>
<keyword id="KW-0805">Transcription regulation</keyword>
<reference key="1">
    <citation type="journal article" date="1997" name="Genes Dev.">
        <title>Mnt, a novel Max-interacting protein is coexpressed with Myc in proliferating cells and mediates repression at Myc binding sites.</title>
        <authorList>
            <person name="Hurlin P.J."/>
            <person name="Queva C."/>
            <person name="Eisenman R.N."/>
        </authorList>
    </citation>
    <scope>NUCLEOTIDE SEQUENCE [MRNA]</scope>
    <source>
        <tissue>Embryo</tissue>
    </source>
</reference>
<reference key="2">
    <citation type="journal article" date="1997" name="EMBO J.">
        <title>Rox, a novel bHLHZip protein expressed in quiescent cells that heterodimerizes with Max, binds a non-canonical E box and acts as a transcriptional repressor.</title>
        <authorList>
            <person name="Meroni G."/>
            <person name="Reymond A."/>
            <person name="Alcalay M."/>
            <person name="Borsani G."/>
            <person name="Tanigami A."/>
            <person name="Tonlorenzi R."/>
            <person name="Lo Nigro C."/>
            <person name="Messali S."/>
            <person name="Zollo M."/>
            <person name="Ledbetter D.H."/>
            <person name="Brent R."/>
            <person name="Ballabio A."/>
            <person name="Carrozzo R."/>
        </authorList>
    </citation>
    <scope>NUCLEOTIDE SEQUENCE [MRNA]</scope>
    <source>
        <tissue>Embryo</tissue>
    </source>
</reference>
<reference key="3">
    <citation type="journal article" date="2009" name="PLoS Biol.">
        <title>Lineage-specific biology revealed by a finished genome assembly of the mouse.</title>
        <authorList>
            <person name="Church D.M."/>
            <person name="Goodstadt L."/>
            <person name="Hillier L.W."/>
            <person name="Zody M.C."/>
            <person name="Goldstein S."/>
            <person name="She X."/>
            <person name="Bult C.J."/>
            <person name="Agarwala R."/>
            <person name="Cherry J.L."/>
            <person name="DiCuccio M."/>
            <person name="Hlavina W."/>
            <person name="Kapustin Y."/>
            <person name="Meric P."/>
            <person name="Maglott D."/>
            <person name="Birtle Z."/>
            <person name="Marques A.C."/>
            <person name="Graves T."/>
            <person name="Zhou S."/>
            <person name="Teague B."/>
            <person name="Potamousis K."/>
            <person name="Churas C."/>
            <person name="Place M."/>
            <person name="Herschleb J."/>
            <person name="Runnheim R."/>
            <person name="Forrest D."/>
            <person name="Amos-Landgraf J."/>
            <person name="Schwartz D.C."/>
            <person name="Cheng Z."/>
            <person name="Lindblad-Toh K."/>
            <person name="Eichler E.E."/>
            <person name="Ponting C.P."/>
        </authorList>
    </citation>
    <scope>NUCLEOTIDE SEQUENCE [LARGE SCALE GENOMIC DNA]</scope>
    <source>
        <strain>C57BL/6J</strain>
    </source>
</reference>
<reference key="4">
    <citation type="submission" date="2005-07" db="EMBL/GenBank/DDBJ databases">
        <authorList>
            <person name="Mural R.J."/>
            <person name="Adams M.D."/>
            <person name="Myers E.W."/>
            <person name="Smith H.O."/>
            <person name="Venter J.C."/>
        </authorList>
    </citation>
    <scope>NUCLEOTIDE SEQUENCE [LARGE SCALE GENOMIC DNA]</scope>
</reference>
<reference key="5">
    <citation type="journal article" date="2004" name="Genome Res.">
        <title>The status, quality, and expansion of the NIH full-length cDNA project: the Mammalian Gene Collection (MGC).</title>
        <authorList>
            <consortium name="The MGC Project Team"/>
        </authorList>
    </citation>
    <scope>NUCLEOTIDE SEQUENCE [LARGE SCALE MRNA]</scope>
    <source>
        <strain>C57BL/6J</strain>
        <tissue>Brain</tissue>
    </source>
</reference>
<gene>
    <name type="primary">Mnt</name>
    <name type="synonym">Rox</name>
</gene>
<organism>
    <name type="scientific">Mus musculus</name>
    <name type="common">Mouse</name>
    <dbReference type="NCBI Taxonomy" id="10090"/>
    <lineage>
        <taxon>Eukaryota</taxon>
        <taxon>Metazoa</taxon>
        <taxon>Chordata</taxon>
        <taxon>Craniata</taxon>
        <taxon>Vertebrata</taxon>
        <taxon>Euteleostomi</taxon>
        <taxon>Mammalia</taxon>
        <taxon>Eutheria</taxon>
        <taxon>Euarchontoglires</taxon>
        <taxon>Glires</taxon>
        <taxon>Rodentia</taxon>
        <taxon>Myomorpha</taxon>
        <taxon>Muroidea</taxon>
        <taxon>Muridae</taxon>
        <taxon>Murinae</taxon>
        <taxon>Mus</taxon>
        <taxon>Mus</taxon>
    </lineage>
</organism>
<sequence>MSIETLLEAARFLEWQAQQQQRAREEQERLRLEREREREQEQKRASNLARLAHALPVEEPRIEAPPLPLSPPAPPPAPPPPLATPAPLTVIPIPVVTNSPQSLPPPPPLPPAAQPLPLAPRQPALVSTPGLSIKEPVTLPTRPQVPTPAPLLPDAKTTVAPTGSPKPLQPLPAPILTIAPHPGVQPQLAPQQPPPPTLGTLKLAPAEEAKSSEQKKRPGGIGTREVHNKLEKNRRAHLKECFETLKRNIPNVDDKKTSNLSVLRTALRYIQSLKRKEKEYEHEMERLAREKIATQQRLAELKHELSQWMDVLEIDRVLRQTGQPEDDQASTSTASEGEDNVDEEMEGDRAGLGPPKLNHRPQPELLKSALPTPSTAPAPLPTHPHPHPHPVALSPAHLPVQQQQPPQQKTPLPAPPPPPATPTQTLVPAPAHLVATAGGGSTVIAHTATTHASVIQTVNHVLQGPGGKHIAHIAPSAPSPAVQLAPATPPIGHITVHPATLNHVAHLGSQLPLYPQPVAVSQPVAVSHIAHTLSHQQVNGTAGLGPPATVMAKPAVGAQVVHHPQLVGQTVLNPVTMVTMPSFPVSTLKLA</sequence>
<comment type="function">
    <text>Binds DNA as a heterodimer with MAX and represses transcription. Binds to the canonical E box sequence 5'-CACGTG-3' and, with higher affinity, to 5'-CACGCG-3'.</text>
</comment>
<comment type="subunit">
    <text>Efficient DNA binding requires dimerization with another bHLH protein. Binds DNA as a homodimer or a heterodimer with MAX.</text>
</comment>
<comment type="subcellular location">
    <subcellularLocation>
        <location>Nucleus</location>
    </subcellularLocation>
</comment>
<dbReference type="EMBL" id="U77356">
    <property type="protein sequence ID" value="AAB38687.1"/>
    <property type="molecule type" value="mRNA"/>
</dbReference>
<dbReference type="EMBL" id="Y07609">
    <property type="protein sequence ID" value="CAA68878.1"/>
    <property type="molecule type" value="mRNA"/>
</dbReference>
<dbReference type="EMBL" id="AL604066">
    <property type="status" value="NOT_ANNOTATED_CDS"/>
    <property type="molecule type" value="Genomic_DNA"/>
</dbReference>
<dbReference type="EMBL" id="CH466596">
    <property type="protein sequence ID" value="EDL12780.1"/>
    <property type="molecule type" value="Genomic_DNA"/>
</dbReference>
<dbReference type="EMBL" id="BC054534">
    <property type="protein sequence ID" value="AAH54534.1"/>
    <property type="molecule type" value="mRNA"/>
</dbReference>
<dbReference type="CCDS" id="CCDS25037.1"/>
<dbReference type="RefSeq" id="NP_034943.3">
    <property type="nucleotide sequence ID" value="NM_010813.3"/>
</dbReference>
<dbReference type="SMR" id="O08789"/>
<dbReference type="BioGRID" id="201461">
    <property type="interactions" value="6"/>
</dbReference>
<dbReference type="FunCoup" id="O08789">
    <property type="interactions" value="3406"/>
</dbReference>
<dbReference type="IntAct" id="O08789">
    <property type="interactions" value="1"/>
</dbReference>
<dbReference type="STRING" id="10090.ENSMUSP00000000291"/>
<dbReference type="GlyGen" id="O08789">
    <property type="glycosylation" value="9 sites, 1 O-linked glycan (4 sites)"/>
</dbReference>
<dbReference type="iPTMnet" id="O08789"/>
<dbReference type="PhosphoSitePlus" id="O08789"/>
<dbReference type="PaxDb" id="10090-ENSMUSP00000000291"/>
<dbReference type="PeptideAtlas" id="O08789"/>
<dbReference type="ProteomicsDB" id="295572"/>
<dbReference type="Pumba" id="O08789"/>
<dbReference type="Antibodypedia" id="22924">
    <property type="antibodies" value="146 antibodies from 31 providers"/>
</dbReference>
<dbReference type="DNASU" id="17428"/>
<dbReference type="Ensembl" id="ENSMUST00000000291.9">
    <property type="protein sequence ID" value="ENSMUSP00000000291.3"/>
    <property type="gene ID" value="ENSMUSG00000000282.13"/>
</dbReference>
<dbReference type="GeneID" id="17428"/>
<dbReference type="KEGG" id="mmu:17428"/>
<dbReference type="UCSC" id="uc011xzb.1">
    <property type="organism name" value="mouse"/>
</dbReference>
<dbReference type="AGR" id="MGI:109150"/>
<dbReference type="CTD" id="4335"/>
<dbReference type="MGI" id="MGI:109150">
    <property type="gene designation" value="Mnt"/>
</dbReference>
<dbReference type="VEuPathDB" id="HostDB:ENSMUSG00000000282"/>
<dbReference type="eggNOG" id="KOG2483">
    <property type="taxonomic scope" value="Eukaryota"/>
</dbReference>
<dbReference type="GeneTree" id="ENSGT00510000048287"/>
<dbReference type="HOGENOM" id="CLU_020165_1_0_1"/>
<dbReference type="InParanoid" id="O08789"/>
<dbReference type="OMA" id="THAQVNG"/>
<dbReference type="OrthoDB" id="5981879at2759"/>
<dbReference type="TreeFam" id="TF315654"/>
<dbReference type="BioGRID-ORCS" id="17428">
    <property type="hits" value="14 hits in 80 CRISPR screens"/>
</dbReference>
<dbReference type="ChiTaRS" id="Mnt">
    <property type="organism name" value="mouse"/>
</dbReference>
<dbReference type="PRO" id="PR:O08789"/>
<dbReference type="Proteomes" id="UP000000589">
    <property type="component" value="Chromosome 11"/>
</dbReference>
<dbReference type="RNAct" id="O08789">
    <property type="molecule type" value="protein"/>
</dbReference>
<dbReference type="Bgee" id="ENSMUSG00000000282">
    <property type="expression patterns" value="Expressed in rostral migratory stream and 261 other cell types or tissues"/>
</dbReference>
<dbReference type="ExpressionAtlas" id="O08789">
    <property type="expression patterns" value="baseline and differential"/>
</dbReference>
<dbReference type="GO" id="GO:0005654">
    <property type="term" value="C:nucleoplasm"/>
    <property type="evidence" value="ECO:0007669"/>
    <property type="project" value="Ensembl"/>
</dbReference>
<dbReference type="GO" id="GO:0005634">
    <property type="term" value="C:nucleus"/>
    <property type="evidence" value="ECO:0000305"/>
    <property type="project" value="MGI"/>
</dbReference>
<dbReference type="GO" id="GO:0003682">
    <property type="term" value="F:chromatin binding"/>
    <property type="evidence" value="ECO:0000314"/>
    <property type="project" value="MGI"/>
</dbReference>
<dbReference type="GO" id="GO:0003677">
    <property type="term" value="F:DNA binding"/>
    <property type="evidence" value="ECO:0000314"/>
    <property type="project" value="MGI"/>
</dbReference>
<dbReference type="GO" id="GO:0003700">
    <property type="term" value="F:DNA-binding transcription factor activity"/>
    <property type="evidence" value="ECO:0000315"/>
    <property type="project" value="MGI"/>
</dbReference>
<dbReference type="GO" id="GO:0001227">
    <property type="term" value="F:DNA-binding transcription repressor activity, RNA polymerase II-specific"/>
    <property type="evidence" value="ECO:0007669"/>
    <property type="project" value="Ensembl"/>
</dbReference>
<dbReference type="GO" id="GO:0042802">
    <property type="term" value="F:identical protein binding"/>
    <property type="evidence" value="ECO:0007669"/>
    <property type="project" value="Ensembl"/>
</dbReference>
<dbReference type="GO" id="GO:0046983">
    <property type="term" value="F:protein dimerization activity"/>
    <property type="evidence" value="ECO:0007669"/>
    <property type="project" value="InterPro"/>
</dbReference>
<dbReference type="GO" id="GO:0000977">
    <property type="term" value="F:RNA polymerase II transcription regulatory region sequence-specific DNA binding"/>
    <property type="evidence" value="ECO:0007669"/>
    <property type="project" value="Ensembl"/>
</dbReference>
<dbReference type="GO" id="GO:0090398">
    <property type="term" value="P:cellular senescence"/>
    <property type="evidence" value="ECO:0000315"/>
    <property type="project" value="MGI"/>
</dbReference>
<dbReference type="GO" id="GO:2001234">
    <property type="term" value="P:negative regulation of apoptotic signaling pathway"/>
    <property type="evidence" value="ECO:0000315"/>
    <property type="project" value="MGI"/>
</dbReference>
<dbReference type="GO" id="GO:0051726">
    <property type="term" value="P:regulation of cell cycle"/>
    <property type="evidence" value="ECO:0000315"/>
    <property type="project" value="MGI"/>
</dbReference>
<dbReference type="GO" id="GO:0006355">
    <property type="term" value="P:regulation of DNA-templated transcription"/>
    <property type="evidence" value="ECO:0000315"/>
    <property type="project" value="MGI"/>
</dbReference>
<dbReference type="CDD" id="cd11402">
    <property type="entry name" value="bHLHzip_Mnt"/>
    <property type="match status" value="1"/>
</dbReference>
<dbReference type="FunFam" id="4.10.280.10:FF:000034">
    <property type="entry name" value="MAX network transcriptional repressor"/>
    <property type="match status" value="1"/>
</dbReference>
<dbReference type="Gene3D" id="4.10.280.10">
    <property type="entry name" value="Helix-loop-helix DNA-binding domain"/>
    <property type="match status" value="1"/>
</dbReference>
<dbReference type="InterPro" id="IPR011598">
    <property type="entry name" value="bHLH_dom"/>
</dbReference>
<dbReference type="InterPro" id="IPR036638">
    <property type="entry name" value="HLH_DNA-bd_sf"/>
</dbReference>
<dbReference type="PANTHER" id="PTHR11969">
    <property type="entry name" value="MAX DIMERIZATION, MAD"/>
    <property type="match status" value="1"/>
</dbReference>
<dbReference type="PANTHER" id="PTHR11969:SF99">
    <property type="entry name" value="MAX-BINDING PROTEIN MNT"/>
    <property type="match status" value="1"/>
</dbReference>
<dbReference type="Pfam" id="PF00010">
    <property type="entry name" value="HLH"/>
    <property type="match status" value="1"/>
</dbReference>
<dbReference type="SMART" id="SM00353">
    <property type="entry name" value="HLH"/>
    <property type="match status" value="1"/>
</dbReference>
<dbReference type="SUPFAM" id="SSF47459">
    <property type="entry name" value="HLH, helix-loop-helix DNA-binding domain"/>
    <property type="match status" value="1"/>
</dbReference>
<dbReference type="PROSITE" id="PS50888">
    <property type="entry name" value="BHLH"/>
    <property type="match status" value="1"/>
</dbReference>
<name>MNT_MOUSE</name>
<protein>
    <recommendedName>
        <fullName>Max-binding protein MNT</fullName>
    </recommendedName>
    <alternativeName>
        <fullName>Myc antagonist MNT</fullName>
    </alternativeName>
    <alternativeName>
        <fullName>Protein ROX</fullName>
    </alternativeName>
</protein>
<accession>O08789</accession>
<accession>P97349</accession>
<accession>Q6GTJ3</accession>
<proteinExistence type="evidence at transcript level"/>